<keyword id="KW-0067">ATP-binding</keyword>
<keyword id="KW-0963">Cytoplasm</keyword>
<keyword id="KW-0418">Kinase</keyword>
<keyword id="KW-0460">Magnesium</keyword>
<keyword id="KW-0479">Metal-binding</keyword>
<keyword id="KW-0545">Nucleotide biosynthesis</keyword>
<keyword id="KW-0547">Nucleotide-binding</keyword>
<keyword id="KW-1185">Reference proteome</keyword>
<keyword id="KW-0808">Transferase</keyword>
<gene>
    <name evidence="1" type="primary">prs</name>
    <name type="ordered locus">THA_396</name>
</gene>
<dbReference type="EC" id="2.7.6.1" evidence="1"/>
<dbReference type="EMBL" id="CP001185">
    <property type="protein sequence ID" value="ACJ74889.1"/>
    <property type="molecule type" value="Genomic_DNA"/>
</dbReference>
<dbReference type="RefSeq" id="WP_012579546.1">
    <property type="nucleotide sequence ID" value="NC_011653.1"/>
</dbReference>
<dbReference type="SMR" id="B7IFM5"/>
<dbReference type="STRING" id="484019.THA_396"/>
<dbReference type="KEGG" id="taf:THA_396"/>
<dbReference type="eggNOG" id="COG0462">
    <property type="taxonomic scope" value="Bacteria"/>
</dbReference>
<dbReference type="HOGENOM" id="CLU_033546_2_0_0"/>
<dbReference type="OrthoDB" id="9777067at2"/>
<dbReference type="UniPathway" id="UPA00087">
    <property type="reaction ID" value="UER00172"/>
</dbReference>
<dbReference type="Proteomes" id="UP000002453">
    <property type="component" value="Chromosome"/>
</dbReference>
<dbReference type="GO" id="GO:0005737">
    <property type="term" value="C:cytoplasm"/>
    <property type="evidence" value="ECO:0007669"/>
    <property type="project" value="UniProtKB-SubCell"/>
</dbReference>
<dbReference type="GO" id="GO:0002189">
    <property type="term" value="C:ribose phosphate diphosphokinase complex"/>
    <property type="evidence" value="ECO:0007669"/>
    <property type="project" value="TreeGrafter"/>
</dbReference>
<dbReference type="GO" id="GO:0005524">
    <property type="term" value="F:ATP binding"/>
    <property type="evidence" value="ECO:0007669"/>
    <property type="project" value="UniProtKB-KW"/>
</dbReference>
<dbReference type="GO" id="GO:0016301">
    <property type="term" value="F:kinase activity"/>
    <property type="evidence" value="ECO:0007669"/>
    <property type="project" value="UniProtKB-KW"/>
</dbReference>
<dbReference type="GO" id="GO:0000287">
    <property type="term" value="F:magnesium ion binding"/>
    <property type="evidence" value="ECO:0007669"/>
    <property type="project" value="UniProtKB-UniRule"/>
</dbReference>
<dbReference type="GO" id="GO:0004749">
    <property type="term" value="F:ribose phosphate diphosphokinase activity"/>
    <property type="evidence" value="ECO:0007669"/>
    <property type="project" value="UniProtKB-UniRule"/>
</dbReference>
<dbReference type="GO" id="GO:0006015">
    <property type="term" value="P:5-phosphoribose 1-diphosphate biosynthetic process"/>
    <property type="evidence" value="ECO:0007669"/>
    <property type="project" value="UniProtKB-UniRule"/>
</dbReference>
<dbReference type="GO" id="GO:0006164">
    <property type="term" value="P:purine nucleotide biosynthetic process"/>
    <property type="evidence" value="ECO:0007669"/>
    <property type="project" value="TreeGrafter"/>
</dbReference>
<dbReference type="GO" id="GO:0009156">
    <property type="term" value="P:ribonucleoside monophosphate biosynthetic process"/>
    <property type="evidence" value="ECO:0007669"/>
    <property type="project" value="InterPro"/>
</dbReference>
<dbReference type="CDD" id="cd06223">
    <property type="entry name" value="PRTases_typeI"/>
    <property type="match status" value="1"/>
</dbReference>
<dbReference type="FunFam" id="3.40.50.2020:FF:000002">
    <property type="entry name" value="Ribose-phosphate pyrophosphokinase"/>
    <property type="match status" value="1"/>
</dbReference>
<dbReference type="FunFam" id="3.40.50.2020:FF:000014">
    <property type="entry name" value="Ribose-phosphate pyrophosphokinase 1"/>
    <property type="match status" value="1"/>
</dbReference>
<dbReference type="Gene3D" id="3.40.50.2020">
    <property type="match status" value="2"/>
</dbReference>
<dbReference type="HAMAP" id="MF_00583_B">
    <property type="entry name" value="RibP_PPkinase_B"/>
    <property type="match status" value="1"/>
</dbReference>
<dbReference type="InterPro" id="IPR000842">
    <property type="entry name" value="PRib_PP_synth_CS"/>
</dbReference>
<dbReference type="InterPro" id="IPR029099">
    <property type="entry name" value="Pribosyltran_N"/>
</dbReference>
<dbReference type="InterPro" id="IPR000836">
    <property type="entry name" value="PRibTrfase_dom"/>
</dbReference>
<dbReference type="InterPro" id="IPR029057">
    <property type="entry name" value="PRTase-like"/>
</dbReference>
<dbReference type="InterPro" id="IPR005946">
    <property type="entry name" value="Rib-P_diPkinase"/>
</dbReference>
<dbReference type="InterPro" id="IPR037515">
    <property type="entry name" value="Rib-P_diPkinase_bac"/>
</dbReference>
<dbReference type="NCBIfam" id="NF002320">
    <property type="entry name" value="PRK01259.1"/>
    <property type="match status" value="1"/>
</dbReference>
<dbReference type="NCBIfam" id="TIGR01251">
    <property type="entry name" value="ribP_PPkin"/>
    <property type="match status" value="1"/>
</dbReference>
<dbReference type="PANTHER" id="PTHR10210">
    <property type="entry name" value="RIBOSE-PHOSPHATE DIPHOSPHOKINASE FAMILY MEMBER"/>
    <property type="match status" value="1"/>
</dbReference>
<dbReference type="PANTHER" id="PTHR10210:SF41">
    <property type="entry name" value="RIBOSE-PHOSPHATE PYROPHOSPHOKINASE 1, CHLOROPLASTIC"/>
    <property type="match status" value="1"/>
</dbReference>
<dbReference type="Pfam" id="PF14572">
    <property type="entry name" value="Pribosyl_synth"/>
    <property type="match status" value="1"/>
</dbReference>
<dbReference type="Pfam" id="PF13793">
    <property type="entry name" value="Pribosyltran_N"/>
    <property type="match status" value="1"/>
</dbReference>
<dbReference type="SMART" id="SM01400">
    <property type="entry name" value="Pribosyltran_N"/>
    <property type="match status" value="1"/>
</dbReference>
<dbReference type="SUPFAM" id="SSF53271">
    <property type="entry name" value="PRTase-like"/>
    <property type="match status" value="1"/>
</dbReference>
<dbReference type="PROSITE" id="PS00114">
    <property type="entry name" value="PRPP_SYNTHASE"/>
    <property type="match status" value="1"/>
</dbReference>
<name>KPRS_THEAB</name>
<protein>
    <recommendedName>
        <fullName evidence="1">Ribose-phosphate pyrophosphokinase</fullName>
        <shortName evidence="1">RPPK</shortName>
        <ecNumber evidence="1">2.7.6.1</ecNumber>
    </recommendedName>
    <alternativeName>
        <fullName evidence="1">5-phospho-D-ribosyl alpha-1-diphosphate synthase</fullName>
    </alternativeName>
    <alternativeName>
        <fullName evidence="1">Phosphoribosyl diphosphate synthase</fullName>
    </alternativeName>
    <alternativeName>
        <fullName evidence="1">Phosphoribosyl pyrophosphate synthase</fullName>
        <shortName evidence="1">P-Rib-PP synthase</shortName>
        <shortName evidence="1">PRPP synthase</shortName>
        <shortName evidence="1">PRPPase</shortName>
    </alternativeName>
</protein>
<evidence type="ECO:0000255" key="1">
    <source>
        <dbReference type="HAMAP-Rule" id="MF_00583"/>
    </source>
</evidence>
<organism>
    <name type="scientific">Thermosipho africanus (strain TCF52B)</name>
    <dbReference type="NCBI Taxonomy" id="484019"/>
    <lineage>
        <taxon>Bacteria</taxon>
        <taxon>Thermotogati</taxon>
        <taxon>Thermotogota</taxon>
        <taxon>Thermotogae</taxon>
        <taxon>Thermotogales</taxon>
        <taxon>Fervidobacteriaceae</taxon>
        <taxon>Thermosipho</taxon>
    </lineage>
</organism>
<sequence>MQIAKNEMKIFSGNANRELAIKVSEYIGTRLADCEVGRFADGEINVKIGETVRGHDTFIIQPTCPPVNENLMELLIMIDALKRASANSIAVVIPYYGYARQDRKAKGRDPITAKLVANLLTVAGATRVMTVDLHSEQIQGFFDIPLDNLWSFPIFAKKLKEDKIVDDDYVIVSPDVGGVKRARQFAERLGGPLAILDKRRPKDNVAEILNIIGEVEGKTAIIVDDIADTARSLVNAAKAIKEKGAKRVIACITHPVLSDGAIERIQNSEIEKIYISDSISHSNLPDKFSVVSLAPLLGEAIVRVRKNLSISILFRQ</sequence>
<comment type="function">
    <text evidence="1">Involved in the biosynthesis of the central metabolite phospho-alpha-D-ribosyl-1-pyrophosphate (PRPP) via the transfer of pyrophosphoryl group from ATP to 1-hydroxyl of ribose-5-phosphate (Rib-5-P).</text>
</comment>
<comment type="catalytic activity">
    <reaction evidence="1">
        <text>D-ribose 5-phosphate + ATP = 5-phospho-alpha-D-ribose 1-diphosphate + AMP + H(+)</text>
        <dbReference type="Rhea" id="RHEA:15609"/>
        <dbReference type="ChEBI" id="CHEBI:15378"/>
        <dbReference type="ChEBI" id="CHEBI:30616"/>
        <dbReference type="ChEBI" id="CHEBI:58017"/>
        <dbReference type="ChEBI" id="CHEBI:78346"/>
        <dbReference type="ChEBI" id="CHEBI:456215"/>
        <dbReference type="EC" id="2.7.6.1"/>
    </reaction>
</comment>
<comment type="cofactor">
    <cofactor evidence="1">
        <name>Mg(2+)</name>
        <dbReference type="ChEBI" id="CHEBI:18420"/>
    </cofactor>
    <text evidence="1">Binds 2 Mg(2+) ions per subunit.</text>
</comment>
<comment type="pathway">
    <text evidence="1">Metabolic intermediate biosynthesis; 5-phospho-alpha-D-ribose 1-diphosphate biosynthesis; 5-phospho-alpha-D-ribose 1-diphosphate from D-ribose 5-phosphate (route I): step 1/1.</text>
</comment>
<comment type="subunit">
    <text evidence="1">Homohexamer.</text>
</comment>
<comment type="subcellular location">
    <subcellularLocation>
        <location evidence="1">Cytoplasm</location>
    </subcellularLocation>
</comment>
<comment type="similarity">
    <text evidence="1">Belongs to the ribose-phosphate pyrophosphokinase family. Class I subfamily.</text>
</comment>
<feature type="chain" id="PRO_1000212141" description="Ribose-phosphate pyrophosphokinase">
    <location>
        <begin position="1"/>
        <end position="316"/>
    </location>
</feature>
<feature type="active site" evidence="1">
    <location>
        <position position="198"/>
    </location>
</feature>
<feature type="binding site" evidence="1">
    <location>
        <begin position="41"/>
        <end position="43"/>
    </location>
    <ligand>
        <name>ATP</name>
        <dbReference type="ChEBI" id="CHEBI:30616"/>
    </ligand>
</feature>
<feature type="binding site" evidence="1">
    <location>
        <begin position="100"/>
        <end position="101"/>
    </location>
    <ligand>
        <name>ATP</name>
        <dbReference type="ChEBI" id="CHEBI:30616"/>
    </ligand>
</feature>
<feature type="binding site" evidence="1">
    <location>
        <position position="134"/>
    </location>
    <ligand>
        <name>Mg(2+)</name>
        <dbReference type="ChEBI" id="CHEBI:18420"/>
        <label>1</label>
    </ligand>
</feature>
<feature type="binding site" evidence="1">
    <location>
        <position position="175"/>
    </location>
    <ligand>
        <name>Mg(2+)</name>
        <dbReference type="ChEBI" id="CHEBI:18420"/>
        <label>2</label>
    </ligand>
</feature>
<feature type="binding site" evidence="1">
    <location>
        <position position="200"/>
    </location>
    <ligand>
        <name>D-ribose 5-phosphate</name>
        <dbReference type="ChEBI" id="CHEBI:78346"/>
    </ligand>
</feature>
<feature type="binding site" evidence="1">
    <location>
        <position position="224"/>
    </location>
    <ligand>
        <name>D-ribose 5-phosphate</name>
        <dbReference type="ChEBI" id="CHEBI:78346"/>
    </ligand>
</feature>
<feature type="binding site" evidence="1">
    <location>
        <begin position="228"/>
        <end position="232"/>
    </location>
    <ligand>
        <name>D-ribose 5-phosphate</name>
        <dbReference type="ChEBI" id="CHEBI:78346"/>
    </ligand>
</feature>
<accession>B7IFM5</accession>
<proteinExistence type="inferred from homology"/>
<reference key="1">
    <citation type="journal article" date="2009" name="J. Bacteriol.">
        <title>The genome of Thermosipho africanus TCF52B: lateral genetic connections to the Firmicutes and Archaea.</title>
        <authorList>
            <person name="Nesboe C.L."/>
            <person name="Bapteste E."/>
            <person name="Curtis B."/>
            <person name="Dahle H."/>
            <person name="Lopez P."/>
            <person name="Macleod D."/>
            <person name="Dlutek M."/>
            <person name="Bowman S."/>
            <person name="Zhaxybayeva O."/>
            <person name="Birkeland N.-K."/>
            <person name="Doolittle W.F."/>
        </authorList>
    </citation>
    <scope>NUCLEOTIDE SEQUENCE [LARGE SCALE GENOMIC DNA]</scope>
    <source>
        <strain>TCF52B</strain>
    </source>
</reference>